<organism>
    <name type="scientific">Mus musculus</name>
    <name type="common">Mouse</name>
    <dbReference type="NCBI Taxonomy" id="10090"/>
    <lineage>
        <taxon>Eukaryota</taxon>
        <taxon>Metazoa</taxon>
        <taxon>Chordata</taxon>
        <taxon>Craniata</taxon>
        <taxon>Vertebrata</taxon>
        <taxon>Euteleostomi</taxon>
        <taxon>Mammalia</taxon>
        <taxon>Eutheria</taxon>
        <taxon>Euarchontoglires</taxon>
        <taxon>Glires</taxon>
        <taxon>Rodentia</taxon>
        <taxon>Myomorpha</taxon>
        <taxon>Muroidea</taxon>
        <taxon>Muridae</taxon>
        <taxon>Murinae</taxon>
        <taxon>Mus</taxon>
        <taxon>Mus</taxon>
    </lineage>
</organism>
<comment type="function">
    <text evidence="6 7 9">Involved in FCER1 (high affinity immunoglobulin epsilon receptor)-mediated signaling in mast cells. May also be involved in BCR (B-cell antigen receptor)-mediated signaling in B-cells and FCGR1 (high affinity immunoglobulin gamma Fc receptor I)-mediated signaling in myeloid cells. Couples activation of these receptors and their associated kinases with distal intracellular events through the recruitment of GRB2.</text>
</comment>
<comment type="subunit">
    <text evidence="6 7">When phosphorylated, interacts with GRB2. May also interact with SOS1, GAB1 and CBL.</text>
</comment>
<comment type="subcellular location">
    <subcellularLocation>
        <location evidence="6 7">Cell membrane</location>
        <topology evidence="6 7">Single-pass type III membrane protein</topology>
    </subcellularLocation>
    <text>Present in lipid rafts.</text>
</comment>
<comment type="alternative products">
    <event type="alternative splicing"/>
    <isoform>
        <id>Q9JHL0-1</id>
        <name>1</name>
        <sequence type="displayed"/>
    </isoform>
    <isoform>
        <id>Q9JHL0-2</id>
        <name>2</name>
        <sequence type="described" ref="VSP_016646"/>
    </isoform>
</comment>
<comment type="tissue specificity">
    <text evidence="5 7 8">Strongly expressed in testis. Expressed in heart, spleen and lung. Present in B-cells and mast cells (at protein level).</text>
</comment>
<comment type="developmental stage">
    <text evidence="9">Hardly expressed in pro-B and pre-B cells. Moderately expressed in immature B-cells, mature B-cells and plasma cells. Highly expressed in transitional B-cells.</text>
</comment>
<comment type="PTM">
    <text evidence="7">Phosphorylated on tyrosines following cross-linking of BCR in B-cells, high affinity IgG receptor (FCGR1) in myeloid cells, or high affinity IgE receptor (FCER1) in mast cells; which induces the recruitment of GRB2.</text>
</comment>
<comment type="disruption phenotype">
    <text evidence="9">Mice exhibit normal T-cell, B-cell and mast cell development and normal humoral response, but have hyperresponsive mast cells.</text>
</comment>
<dbReference type="EMBL" id="AF257136">
    <property type="protein sequence ID" value="AAF91353.1"/>
    <property type="molecule type" value="mRNA"/>
</dbReference>
<dbReference type="EMBL" id="AF139987">
    <property type="protein sequence ID" value="AAF75558.1"/>
    <property type="molecule type" value="Genomic_DNA"/>
</dbReference>
<dbReference type="EMBL" id="AF139987">
    <property type="protein sequence ID" value="AAF75559.1"/>
    <property type="molecule type" value="Genomic_DNA"/>
</dbReference>
<dbReference type="EMBL" id="AY190024">
    <property type="protein sequence ID" value="AAO63156.1"/>
    <property type="molecule type" value="mRNA"/>
</dbReference>
<dbReference type="EMBL" id="AF289664">
    <property type="protein sequence ID" value="AAF99331.1"/>
    <property type="molecule type" value="Genomic_DNA"/>
</dbReference>
<dbReference type="EMBL" id="AK134721">
    <property type="protein sequence ID" value="BAE22256.1"/>
    <property type="molecule type" value="mRNA"/>
</dbReference>
<dbReference type="EMBL" id="AK138953">
    <property type="protein sequence ID" value="BAE23833.1"/>
    <property type="molecule type" value="mRNA"/>
</dbReference>
<dbReference type="EMBL" id="AK143533">
    <property type="protein sequence ID" value="BAE25422.1"/>
    <property type="molecule type" value="mRNA"/>
</dbReference>
<dbReference type="EMBL" id="AK162321">
    <property type="protein sequence ID" value="BAE36852.1"/>
    <property type="molecule type" value="mRNA"/>
</dbReference>
<dbReference type="EMBL" id="BC005804">
    <property type="protein sequence ID" value="AAH05804.1"/>
    <property type="molecule type" value="mRNA"/>
</dbReference>
<dbReference type="CCDS" id="CCDS39311.1">
    <molecule id="Q9JHL0-2"/>
</dbReference>
<dbReference type="CCDS" id="CCDS39312.1">
    <molecule id="Q9JHL0-1"/>
</dbReference>
<dbReference type="RefSeq" id="NP_064428.1">
    <molecule id="Q9JHL0-1"/>
    <property type="nucleotide sequence ID" value="NM_020044.3"/>
</dbReference>
<dbReference type="RefSeq" id="NP_075253.2">
    <molecule id="Q9JHL0-2"/>
    <property type="nucleotide sequence ID" value="NM_022964.4"/>
</dbReference>
<dbReference type="RefSeq" id="XP_006504513.1">
    <molecule id="Q9JHL0-1"/>
    <property type="nucleotide sequence ID" value="XM_006504450.2"/>
</dbReference>
<dbReference type="RefSeq" id="XP_006504514.1">
    <molecule id="Q9JHL0-1"/>
    <property type="nucleotide sequence ID" value="XM_006504451.4"/>
</dbReference>
<dbReference type="RefSeq" id="XP_006504515.1">
    <molecule id="Q9JHL0-2"/>
    <property type="nucleotide sequence ID" value="XM_006504452.2"/>
</dbReference>
<dbReference type="BioGRID" id="208156">
    <property type="interactions" value="1"/>
</dbReference>
<dbReference type="CORUM" id="Q9JHL0"/>
<dbReference type="FunCoup" id="Q9JHL0">
    <property type="interactions" value="474"/>
</dbReference>
<dbReference type="STRING" id="10090.ENSMUSP00000046900"/>
<dbReference type="iPTMnet" id="Q9JHL0"/>
<dbReference type="PhosphoSitePlus" id="Q9JHL0"/>
<dbReference type="SwissPalm" id="Q9JHL0"/>
<dbReference type="PaxDb" id="10090-ENSMUSP00000046900"/>
<dbReference type="PeptideAtlas" id="Q9JHL0"/>
<dbReference type="ProteomicsDB" id="295536">
    <molecule id="Q9JHL0-1"/>
</dbReference>
<dbReference type="ProteomicsDB" id="295537">
    <molecule id="Q9JHL0-2"/>
</dbReference>
<dbReference type="Antibodypedia" id="1198">
    <property type="antibodies" value="504 antibodies from 39 providers"/>
</dbReference>
<dbReference type="DNASU" id="56743"/>
<dbReference type="Ensembl" id="ENSMUST00000036362.13">
    <molecule id="Q9JHL0-1"/>
    <property type="protein sequence ID" value="ENSMUSP00000046900.7"/>
    <property type="gene ID" value="ENSMUSG00000040751.13"/>
</dbReference>
<dbReference type="Ensembl" id="ENSMUST00000077636.8">
    <molecule id="Q9JHL0-2"/>
    <property type="protein sequence ID" value="ENSMUSP00000076824.5"/>
    <property type="gene ID" value="ENSMUSG00000040751.13"/>
</dbReference>
<dbReference type="Ensembl" id="ENSMUST00000200998.4">
    <molecule id="Q9JHL0-1"/>
    <property type="protein sequence ID" value="ENSMUSP00000143977.2"/>
    <property type="gene ID" value="ENSMUSG00000040751.13"/>
</dbReference>
<dbReference type="GeneID" id="56743"/>
<dbReference type="KEGG" id="mmu:56743"/>
<dbReference type="UCSC" id="uc008zwm.2">
    <molecule id="Q9JHL0-1"/>
    <property type="organism name" value="mouse"/>
</dbReference>
<dbReference type="UCSC" id="uc008zwo.2">
    <molecule id="Q9JHL0-2"/>
    <property type="organism name" value="mouse"/>
</dbReference>
<dbReference type="AGR" id="MGI:1926479"/>
<dbReference type="CTD" id="7462"/>
<dbReference type="MGI" id="MGI:1926479">
    <property type="gene designation" value="Lat2"/>
</dbReference>
<dbReference type="VEuPathDB" id="HostDB:ENSMUSG00000040751"/>
<dbReference type="eggNOG" id="ENOG502SH0N">
    <property type="taxonomic scope" value="Eukaryota"/>
</dbReference>
<dbReference type="GeneTree" id="ENSGT00390000006821"/>
<dbReference type="HOGENOM" id="CLU_099084_0_0_1"/>
<dbReference type="InParanoid" id="Q9JHL0"/>
<dbReference type="OMA" id="FMGSQTY"/>
<dbReference type="OrthoDB" id="9447847at2759"/>
<dbReference type="PhylomeDB" id="Q9JHL0"/>
<dbReference type="TreeFam" id="TF336203"/>
<dbReference type="Reactome" id="R-MMU-2730905">
    <property type="pathway name" value="Role of LAT2/NTAL/LAB on calcium mobilization"/>
</dbReference>
<dbReference type="BioGRID-ORCS" id="56743">
    <property type="hits" value="2 hits in 79 CRISPR screens"/>
</dbReference>
<dbReference type="ChiTaRS" id="Lat2">
    <property type="organism name" value="mouse"/>
</dbReference>
<dbReference type="PRO" id="PR:Q9JHL0"/>
<dbReference type="Proteomes" id="UP000000589">
    <property type="component" value="Chromosome 5"/>
</dbReference>
<dbReference type="RNAct" id="Q9JHL0">
    <property type="molecule type" value="protein"/>
</dbReference>
<dbReference type="Bgee" id="ENSMUSG00000040751">
    <property type="expression patterns" value="Expressed in spleen and 97 other cell types or tissues"/>
</dbReference>
<dbReference type="ExpressionAtlas" id="Q9JHL0">
    <property type="expression patterns" value="baseline and differential"/>
</dbReference>
<dbReference type="GO" id="GO:0045121">
    <property type="term" value="C:membrane raft"/>
    <property type="evidence" value="ECO:0000250"/>
    <property type="project" value="HGNC-UCL"/>
</dbReference>
<dbReference type="GO" id="GO:0005886">
    <property type="term" value="C:plasma membrane"/>
    <property type="evidence" value="ECO:0007669"/>
    <property type="project" value="UniProtKB-SubCell"/>
</dbReference>
<dbReference type="GO" id="GO:0042169">
    <property type="term" value="F:SH2 domain binding"/>
    <property type="evidence" value="ECO:0000250"/>
    <property type="project" value="HGNC-UCL"/>
</dbReference>
<dbReference type="GO" id="GO:0002250">
    <property type="term" value="P:adaptive immune response"/>
    <property type="evidence" value="ECO:0007669"/>
    <property type="project" value="UniProtKB-KW"/>
</dbReference>
<dbReference type="GO" id="GO:0042113">
    <property type="term" value="P:B cell activation"/>
    <property type="evidence" value="ECO:0000250"/>
    <property type="project" value="HGNC-UCL"/>
</dbReference>
<dbReference type="GO" id="GO:0050853">
    <property type="term" value="P:B cell receptor signaling pathway"/>
    <property type="evidence" value="ECO:0000250"/>
    <property type="project" value="HGNC-UCL"/>
</dbReference>
<dbReference type="GO" id="GO:0019722">
    <property type="term" value="P:calcium-mediated signaling"/>
    <property type="evidence" value="ECO:0000250"/>
    <property type="project" value="HGNC-UCL"/>
</dbReference>
<dbReference type="GO" id="GO:0035556">
    <property type="term" value="P:intracellular signal transduction"/>
    <property type="evidence" value="ECO:0000250"/>
    <property type="project" value="HGNC-UCL"/>
</dbReference>
<dbReference type="GO" id="GO:0043303">
    <property type="term" value="P:mast cell degranulation"/>
    <property type="evidence" value="ECO:0007669"/>
    <property type="project" value="UniProtKB-KW"/>
</dbReference>
<dbReference type="InterPro" id="IPR031428">
    <property type="entry name" value="LAT2"/>
</dbReference>
<dbReference type="PANTHER" id="PTHR15646">
    <property type="entry name" value="LINKER FOR ACTIVATION OF T-CELLS FAMILY MEMBER 2"/>
    <property type="match status" value="1"/>
</dbReference>
<dbReference type="PANTHER" id="PTHR15646:SF5">
    <property type="entry name" value="LINKER FOR ACTIVATION OF T-CELLS FAMILY MEMBER 2"/>
    <property type="match status" value="1"/>
</dbReference>
<dbReference type="Pfam" id="PF15703">
    <property type="entry name" value="LAT2"/>
    <property type="match status" value="1"/>
</dbReference>
<keyword id="KW-1064">Adaptive immunity</keyword>
<keyword id="KW-0025">Alternative splicing</keyword>
<keyword id="KW-1003">Cell membrane</keyword>
<keyword id="KW-0391">Immunity</keyword>
<keyword id="KW-0449">Lipoprotein</keyword>
<keyword id="KW-0467">Mast cell degranulation</keyword>
<keyword id="KW-0472">Membrane</keyword>
<keyword id="KW-0564">Palmitate</keyword>
<keyword id="KW-0597">Phosphoprotein</keyword>
<keyword id="KW-1185">Reference proteome</keyword>
<keyword id="KW-0735">Signal-anchor</keyword>
<keyword id="KW-0812">Transmembrane</keyword>
<keyword id="KW-1133">Transmembrane helix</keyword>
<feature type="chain" id="PRO_0000083335" description="Linker for activation of T-cells family member 2">
    <location>
        <begin position="1"/>
        <end position="203"/>
    </location>
</feature>
<feature type="topological domain" description="Extracellular" evidence="3">
    <location>
        <begin position="1"/>
        <end position="6"/>
    </location>
</feature>
<feature type="transmembrane region" description="Helical; Signal-anchor for type III membrane protein" evidence="3">
    <location>
        <begin position="7"/>
        <end position="27"/>
    </location>
</feature>
<feature type="topological domain" description="Cytoplasmic" evidence="3">
    <location>
        <begin position="28"/>
        <end position="203"/>
    </location>
</feature>
<feature type="region of interest" description="Disordered" evidence="4">
    <location>
        <begin position="171"/>
        <end position="203"/>
    </location>
</feature>
<feature type="modified residue" description="Phosphotyrosine" evidence="13">
    <location>
        <position position="59"/>
    </location>
</feature>
<feature type="modified residue" description="Phosphoserine" evidence="13">
    <location>
        <position position="60"/>
    </location>
</feature>
<feature type="modified residue" description="Phosphoserine" evidence="14">
    <location>
        <position position="95"/>
    </location>
</feature>
<feature type="modified residue" description="Phosphotyrosine" evidence="2">
    <location>
        <position position="139"/>
    </location>
</feature>
<feature type="modified residue" description="Phosphotyrosine" evidence="2">
    <location>
        <position position="160"/>
    </location>
</feature>
<feature type="modified residue" description="Phosphotyrosine" evidence="2">
    <location>
        <position position="192"/>
    </location>
</feature>
<feature type="lipid moiety-binding region" description="S-palmitoyl cysteine" evidence="1">
    <location>
        <position position="26"/>
    </location>
</feature>
<feature type="lipid moiety-binding region" description="S-palmitoyl cysteine" evidence="1">
    <location>
        <position position="29"/>
    </location>
</feature>
<feature type="splice variant" id="VSP_016646" description="In isoform 2." evidence="10 11">
    <location>
        <begin position="92"/>
        <end position="103"/>
    </location>
</feature>
<feature type="sequence conflict" description="In Ref. 5; BAE22256." evidence="12" ref="5">
    <original>V</original>
    <variation>E</variation>
    <location>
        <position position="114"/>
    </location>
</feature>
<gene>
    <name type="primary">Lat2</name>
    <name type="synonym">Lab</name>
    <name type="synonym">Ntal</name>
    <name type="synonym">Wbscr15</name>
    <name type="synonym">Wbscr5</name>
</gene>
<evidence type="ECO:0000250" key="1"/>
<evidence type="ECO:0000250" key="2">
    <source>
        <dbReference type="UniProtKB" id="Q9GZY6"/>
    </source>
</evidence>
<evidence type="ECO:0000255" key="3"/>
<evidence type="ECO:0000256" key="4">
    <source>
        <dbReference type="SAM" id="MobiDB-lite"/>
    </source>
</evidence>
<evidence type="ECO:0000269" key="5">
    <source>
    </source>
</evidence>
<evidence type="ECO:0000269" key="6">
    <source>
    </source>
</evidence>
<evidence type="ECO:0000269" key="7">
    <source>
    </source>
</evidence>
<evidence type="ECO:0000269" key="8">
    <source>
    </source>
</evidence>
<evidence type="ECO:0000269" key="9">
    <source>
    </source>
</evidence>
<evidence type="ECO:0000303" key="10">
    <source>
    </source>
</evidence>
<evidence type="ECO:0000303" key="11">
    <source>
    </source>
</evidence>
<evidence type="ECO:0000305" key="12"/>
<evidence type="ECO:0007744" key="13">
    <source>
    </source>
</evidence>
<evidence type="ECO:0007744" key="14">
    <source>
    </source>
</evidence>
<name>NTAL_MOUSE</name>
<protein>
    <recommendedName>
        <fullName>Linker for activation of T-cells family member 2</fullName>
    </recommendedName>
    <alternativeName>
        <fullName>Linker for activation of B-cells</fullName>
    </alternativeName>
    <alternativeName>
        <fullName>Membrane-associated adapter molecule</fullName>
    </alternativeName>
    <alternativeName>
        <fullName>Non-T-cell activation linker</fullName>
    </alternativeName>
    <alternativeName>
        <fullName>Williams-Beuren syndrome chromosomal region 15 protein homolog</fullName>
    </alternativeName>
</protein>
<sequence length="203" mass="22876">MSAELELLWPVSGLLLLLLGATAWLCVHCSRPGVKRNEKIYEQRNRQENAQSSAAAQTYSLARQVWPGPQMDTAPNKSFERKNKMLFSHLEGPESPRYQNFYKGSNQEPDAAYVDPIPTNYYNWGCFQKPSEDDDSNSYENVLVCKPSTPESGVEDFEDYQNSVSIHQWRESKRTMGAPMSLSGSPDEEPDYVNGDVAAAENI</sequence>
<proteinExistence type="evidence at protein level"/>
<reference key="1">
    <citation type="journal article" date="2000" name="Cytogenet. Cell Genet.">
        <title>Divergent human and mouse orthologs of a novel gene (WBSCR15/Wbscr15) reside within the genomic interval commonly deleted in Williams syndrome.</title>
        <authorList>
            <person name="Doyle J.L."/>
            <person name="DeSilva U."/>
            <person name="Miller W."/>
            <person name="Green E.D."/>
        </authorList>
    </citation>
    <scope>NUCLEOTIDE SEQUENCE [MRNA] (ISOFORM 1)</scope>
    <scope>TISSUE SPECIFICITY</scope>
    <source>
        <strain>C57BL/6J</strain>
    </source>
</reference>
<reference key="2">
    <citation type="journal article" date="2000" name="Mamm. Genome">
        <title>Comparative genomic sequence analysis of the Williams syndrome region (LIMK1-RFC2) of human chromosome 7q11.23.</title>
        <authorList>
            <person name="Martindale D.W."/>
            <person name="Wilson M.D."/>
            <person name="Wang D."/>
            <person name="Burke R.D."/>
            <person name="Chen X."/>
            <person name="Duronio V."/>
            <person name="Koop B.F."/>
        </authorList>
    </citation>
    <scope>NUCLEOTIDE SEQUENCE [GENOMIC DNA]</scope>
    <scope>ALTERNATIVE SPLICING (ISOFORMS 1 AND 2)</scope>
    <source>
        <strain>129/SvJ</strain>
    </source>
</reference>
<reference key="3">
    <citation type="journal article" date="2003" name="Nat. Immunol.">
        <title>LAB: a new membrane-associated adaptor molecule in B cell activation.</title>
        <authorList>
            <person name="Janssen E."/>
            <person name="Zhu M."/>
            <person name="Zhang W."/>
            <person name="Koonpaew S."/>
            <person name="Zhang W."/>
        </authorList>
    </citation>
    <scope>NUCLEOTIDE SEQUENCE [MRNA] (ISOFORM 1)</scope>
    <source>
        <strain>C57BL/6J</strain>
        <tissue>Spleen</tissue>
    </source>
</reference>
<reference key="4">
    <citation type="submission" date="2000-07" db="EMBL/GenBank/DDBJ databases">
        <authorList>
            <person name="Green E.D."/>
        </authorList>
    </citation>
    <scope>NUCLEOTIDE SEQUENCE [GENOMIC DNA]</scope>
    <source>
        <strain>129/Sv</strain>
    </source>
</reference>
<reference key="5">
    <citation type="journal article" date="2005" name="Science">
        <title>The transcriptional landscape of the mammalian genome.</title>
        <authorList>
            <person name="Carninci P."/>
            <person name="Kasukawa T."/>
            <person name="Katayama S."/>
            <person name="Gough J."/>
            <person name="Frith M.C."/>
            <person name="Maeda N."/>
            <person name="Oyama R."/>
            <person name="Ravasi T."/>
            <person name="Lenhard B."/>
            <person name="Wells C."/>
            <person name="Kodzius R."/>
            <person name="Shimokawa K."/>
            <person name="Bajic V.B."/>
            <person name="Brenner S.E."/>
            <person name="Batalov S."/>
            <person name="Forrest A.R."/>
            <person name="Zavolan M."/>
            <person name="Davis M.J."/>
            <person name="Wilming L.G."/>
            <person name="Aidinis V."/>
            <person name="Allen J.E."/>
            <person name="Ambesi-Impiombato A."/>
            <person name="Apweiler R."/>
            <person name="Aturaliya R.N."/>
            <person name="Bailey T.L."/>
            <person name="Bansal M."/>
            <person name="Baxter L."/>
            <person name="Beisel K.W."/>
            <person name="Bersano T."/>
            <person name="Bono H."/>
            <person name="Chalk A.M."/>
            <person name="Chiu K.P."/>
            <person name="Choudhary V."/>
            <person name="Christoffels A."/>
            <person name="Clutterbuck D.R."/>
            <person name="Crowe M.L."/>
            <person name="Dalla E."/>
            <person name="Dalrymple B.P."/>
            <person name="de Bono B."/>
            <person name="Della Gatta G."/>
            <person name="di Bernardo D."/>
            <person name="Down T."/>
            <person name="Engstrom P."/>
            <person name="Fagiolini M."/>
            <person name="Faulkner G."/>
            <person name="Fletcher C.F."/>
            <person name="Fukushima T."/>
            <person name="Furuno M."/>
            <person name="Futaki S."/>
            <person name="Gariboldi M."/>
            <person name="Georgii-Hemming P."/>
            <person name="Gingeras T.R."/>
            <person name="Gojobori T."/>
            <person name="Green R.E."/>
            <person name="Gustincich S."/>
            <person name="Harbers M."/>
            <person name="Hayashi Y."/>
            <person name="Hensch T.K."/>
            <person name="Hirokawa N."/>
            <person name="Hill D."/>
            <person name="Huminiecki L."/>
            <person name="Iacono M."/>
            <person name="Ikeo K."/>
            <person name="Iwama A."/>
            <person name="Ishikawa T."/>
            <person name="Jakt M."/>
            <person name="Kanapin A."/>
            <person name="Katoh M."/>
            <person name="Kawasawa Y."/>
            <person name="Kelso J."/>
            <person name="Kitamura H."/>
            <person name="Kitano H."/>
            <person name="Kollias G."/>
            <person name="Krishnan S.P."/>
            <person name="Kruger A."/>
            <person name="Kummerfeld S.K."/>
            <person name="Kurochkin I.V."/>
            <person name="Lareau L.F."/>
            <person name="Lazarevic D."/>
            <person name="Lipovich L."/>
            <person name="Liu J."/>
            <person name="Liuni S."/>
            <person name="McWilliam S."/>
            <person name="Madan Babu M."/>
            <person name="Madera M."/>
            <person name="Marchionni L."/>
            <person name="Matsuda H."/>
            <person name="Matsuzawa S."/>
            <person name="Miki H."/>
            <person name="Mignone F."/>
            <person name="Miyake S."/>
            <person name="Morris K."/>
            <person name="Mottagui-Tabar S."/>
            <person name="Mulder N."/>
            <person name="Nakano N."/>
            <person name="Nakauchi H."/>
            <person name="Ng P."/>
            <person name="Nilsson R."/>
            <person name="Nishiguchi S."/>
            <person name="Nishikawa S."/>
            <person name="Nori F."/>
            <person name="Ohara O."/>
            <person name="Okazaki Y."/>
            <person name="Orlando V."/>
            <person name="Pang K.C."/>
            <person name="Pavan W.J."/>
            <person name="Pavesi G."/>
            <person name="Pesole G."/>
            <person name="Petrovsky N."/>
            <person name="Piazza S."/>
            <person name="Reed J."/>
            <person name="Reid J.F."/>
            <person name="Ring B.Z."/>
            <person name="Ringwald M."/>
            <person name="Rost B."/>
            <person name="Ruan Y."/>
            <person name="Salzberg S.L."/>
            <person name="Sandelin A."/>
            <person name="Schneider C."/>
            <person name="Schoenbach C."/>
            <person name="Sekiguchi K."/>
            <person name="Semple C.A."/>
            <person name="Seno S."/>
            <person name="Sessa L."/>
            <person name="Sheng Y."/>
            <person name="Shibata Y."/>
            <person name="Shimada H."/>
            <person name="Shimada K."/>
            <person name="Silva D."/>
            <person name="Sinclair B."/>
            <person name="Sperling S."/>
            <person name="Stupka E."/>
            <person name="Sugiura K."/>
            <person name="Sultana R."/>
            <person name="Takenaka Y."/>
            <person name="Taki K."/>
            <person name="Tammoja K."/>
            <person name="Tan S.L."/>
            <person name="Tang S."/>
            <person name="Taylor M.S."/>
            <person name="Tegner J."/>
            <person name="Teichmann S.A."/>
            <person name="Ueda H.R."/>
            <person name="van Nimwegen E."/>
            <person name="Verardo R."/>
            <person name="Wei C.L."/>
            <person name="Yagi K."/>
            <person name="Yamanishi H."/>
            <person name="Zabarovsky E."/>
            <person name="Zhu S."/>
            <person name="Zimmer A."/>
            <person name="Hide W."/>
            <person name="Bult C."/>
            <person name="Grimmond S.M."/>
            <person name="Teasdale R.D."/>
            <person name="Liu E.T."/>
            <person name="Brusic V."/>
            <person name="Quackenbush J."/>
            <person name="Wahlestedt C."/>
            <person name="Mattick J.S."/>
            <person name="Hume D.A."/>
            <person name="Kai C."/>
            <person name="Sasaki D."/>
            <person name="Tomaru Y."/>
            <person name="Fukuda S."/>
            <person name="Kanamori-Katayama M."/>
            <person name="Suzuki M."/>
            <person name="Aoki J."/>
            <person name="Arakawa T."/>
            <person name="Iida J."/>
            <person name="Imamura K."/>
            <person name="Itoh M."/>
            <person name="Kato T."/>
            <person name="Kawaji H."/>
            <person name="Kawagashira N."/>
            <person name="Kawashima T."/>
            <person name="Kojima M."/>
            <person name="Kondo S."/>
            <person name="Konno H."/>
            <person name="Nakano K."/>
            <person name="Ninomiya N."/>
            <person name="Nishio T."/>
            <person name="Okada M."/>
            <person name="Plessy C."/>
            <person name="Shibata K."/>
            <person name="Shiraki T."/>
            <person name="Suzuki S."/>
            <person name="Tagami M."/>
            <person name="Waki K."/>
            <person name="Watahiki A."/>
            <person name="Okamura-Oho Y."/>
            <person name="Suzuki H."/>
            <person name="Kawai J."/>
            <person name="Hayashizaki Y."/>
        </authorList>
    </citation>
    <scope>NUCLEOTIDE SEQUENCE [LARGE SCALE MRNA] (ISOFORMS 1 AND 2)</scope>
    <source>
        <strain>C57BL/6J</strain>
        <tissue>Aorta</tissue>
        <tissue>Cecum</tissue>
        <tissue>Embryo</tissue>
        <tissue>Medulla oblongata</tissue>
        <tissue>Vein</tissue>
    </source>
</reference>
<reference key="6">
    <citation type="journal article" date="2004" name="Genome Res.">
        <title>The status, quality, and expansion of the NIH full-length cDNA project: the Mammalian Gene Collection (MGC).</title>
        <authorList>
            <consortium name="The MGC Project Team"/>
        </authorList>
    </citation>
    <scope>NUCLEOTIDE SEQUENCE [LARGE SCALE MRNA] (ISOFORM 2)</scope>
    <source>
        <strain>129</strain>
        <tissue>Mammary tumor</tissue>
    </source>
</reference>
<reference key="7">
    <citation type="journal article" date="2004" name="Immunity">
        <title>Grb2 and the non-T cell activation linker NTAL constitute a Ca(2+)-regulating signal circuit in B lymphocytes.</title>
        <authorList>
            <person name="Stork B."/>
            <person name="Engelke M."/>
            <person name="Frey J."/>
            <person name="Horejsi V."/>
            <person name="Hamm-Baarke A."/>
            <person name="Schraven B."/>
            <person name="Kurosaki T."/>
            <person name="Wienands J."/>
        </authorList>
    </citation>
    <scope>TISSUE SPECIFICITY</scope>
</reference>
<reference key="8">
    <citation type="journal article" date="2004" name="J. Exp. Med.">
        <title>Positive and negative regulation of FcepsilonRI-mediated signaling by the adaptor protein LAB/NTAL.</title>
        <authorList>
            <person name="Zhu M."/>
            <person name="Liu Y."/>
            <person name="Koonpaew S."/>
            <person name="Granillo O."/>
            <person name="Zhang W."/>
        </authorList>
    </citation>
    <scope>TISSUE SPECIFICITY</scope>
    <scope>PHOSPHORYLATION</scope>
    <scope>INTERACTION WITH GRB2</scope>
    <scope>FUNCTION</scope>
    <scope>SUBCELLULAR LOCATION</scope>
</reference>
<reference key="9">
    <citation type="journal article" date="2004" name="J. Exp. Med.">
        <title>Negative regulation of mast cell signaling and function by the adaptor LAB/NTAL.</title>
        <authorList>
            <person name="Volna P."/>
            <person name="Lebduska P."/>
            <person name="Draberova L."/>
            <person name="Simova S."/>
            <person name="Heneberg P."/>
            <person name="Boubelik M."/>
            <person name="Bugajev V."/>
            <person name="Malissen B."/>
            <person name="Wilson B.S."/>
            <person name="Horejsi V."/>
            <person name="Malissen M."/>
            <person name="Draber P."/>
        </authorList>
    </citation>
    <scope>FUNCTION</scope>
    <scope>INTERACTION WITH GRB2</scope>
    <scope>SUBCELLULAR LOCATION</scope>
</reference>
<reference key="10">
    <citation type="journal article" date="2005" name="Mol. Cell. Biol.">
        <title>Single and combined deletions of the NTAL/LAB and LAT adaptors minimally affect B-cell development and function.</title>
        <authorList>
            <person name="Wang Y."/>
            <person name="Horvath O."/>
            <person name="Hamm-Baarke A."/>
            <person name="Richelme M."/>
            <person name="Gregoire C."/>
            <person name="Guinamard R."/>
            <person name="Horejsi V."/>
            <person name="Angelisova P."/>
            <person name="Spicka J."/>
            <person name="Schraven B."/>
            <person name="Malissen B."/>
            <person name="Malissen M."/>
        </authorList>
    </citation>
    <scope>DEVELOPMENTAL STAGE</scope>
    <scope>FUNCTION</scope>
    <scope>DISRUPTION PHENOTYPE</scope>
</reference>
<reference key="11">
    <citation type="journal article" date="2007" name="J. Immunol.">
        <title>Quantitative time-resolved phosphoproteomic analysis of mast cell signaling.</title>
        <authorList>
            <person name="Cao L."/>
            <person name="Yu K."/>
            <person name="Banh C."/>
            <person name="Nguyen V."/>
            <person name="Ritz A."/>
            <person name="Raphael B.J."/>
            <person name="Kawakami Y."/>
            <person name="Kawakami T."/>
            <person name="Salomon A.R."/>
        </authorList>
    </citation>
    <scope>PHOSPHORYLATION [LARGE SCALE ANALYSIS] AT TYR-59 AND SER-60</scope>
    <scope>IDENTIFICATION BY MASS SPECTROMETRY [LARGE SCALE ANALYSIS]</scope>
    <source>
        <tissue>Mast cell</tissue>
    </source>
</reference>
<reference key="12">
    <citation type="journal article" date="2009" name="Immunity">
        <title>The phagosomal proteome in interferon-gamma-activated macrophages.</title>
        <authorList>
            <person name="Trost M."/>
            <person name="English L."/>
            <person name="Lemieux S."/>
            <person name="Courcelles M."/>
            <person name="Desjardins M."/>
            <person name="Thibault P."/>
        </authorList>
    </citation>
    <scope>PHOSPHORYLATION [LARGE SCALE ANALYSIS] AT SER-95</scope>
    <scope>IDENTIFICATION BY MASS SPECTROMETRY [LARGE SCALE ANALYSIS]</scope>
</reference>
<accession>Q9JHL0</accession>
<accession>Q3UYF6</accession>
<accession>Q9JJ29</accession>